<organism>
    <name type="scientific">Corynebacterium diphtheriae (strain ATCC 700971 / NCTC 13129 / Biotype gravis)</name>
    <dbReference type="NCBI Taxonomy" id="257309"/>
    <lineage>
        <taxon>Bacteria</taxon>
        <taxon>Bacillati</taxon>
        <taxon>Actinomycetota</taxon>
        <taxon>Actinomycetes</taxon>
        <taxon>Mycobacteriales</taxon>
        <taxon>Corynebacteriaceae</taxon>
        <taxon>Corynebacterium</taxon>
    </lineage>
</organism>
<keyword id="KW-0963">Cytoplasm</keyword>
<keyword id="KW-0342">GTP-binding</keyword>
<keyword id="KW-0396">Initiation factor</keyword>
<keyword id="KW-0547">Nucleotide-binding</keyword>
<keyword id="KW-0648">Protein biosynthesis</keyword>
<keyword id="KW-1185">Reference proteome</keyword>
<reference key="1">
    <citation type="journal article" date="2003" name="Nucleic Acids Res.">
        <title>The complete genome sequence and analysis of Corynebacterium diphtheriae NCTC13129.</title>
        <authorList>
            <person name="Cerdeno-Tarraga A.-M."/>
            <person name="Efstratiou A."/>
            <person name="Dover L.G."/>
            <person name="Holden M.T.G."/>
            <person name="Pallen M.J."/>
            <person name="Bentley S.D."/>
            <person name="Besra G.S."/>
            <person name="Churcher C.M."/>
            <person name="James K.D."/>
            <person name="De Zoysa A."/>
            <person name="Chillingworth T."/>
            <person name="Cronin A."/>
            <person name="Dowd L."/>
            <person name="Feltwell T."/>
            <person name="Hamlin N."/>
            <person name="Holroyd S."/>
            <person name="Jagels K."/>
            <person name="Moule S."/>
            <person name="Quail M.A."/>
            <person name="Rabbinowitsch E."/>
            <person name="Rutherford K.M."/>
            <person name="Thomson N.R."/>
            <person name="Unwin L."/>
            <person name="Whitehead S."/>
            <person name="Barrell B.G."/>
            <person name="Parkhill J."/>
        </authorList>
    </citation>
    <scope>NUCLEOTIDE SEQUENCE [LARGE SCALE GENOMIC DNA]</scope>
    <source>
        <strain>ATCC 700971 / NCTC 13129 / Biotype gravis</strain>
    </source>
</reference>
<accession>Q6NGN2</accession>
<evidence type="ECO:0000250" key="1"/>
<evidence type="ECO:0000255" key="2">
    <source>
        <dbReference type="HAMAP-Rule" id="MF_00100"/>
    </source>
</evidence>
<evidence type="ECO:0000256" key="3">
    <source>
        <dbReference type="SAM" id="MobiDB-lite"/>
    </source>
</evidence>
<gene>
    <name evidence="2" type="primary">infB</name>
    <name type="ordered locus">DIP1477</name>
</gene>
<name>IF2_CORDI</name>
<dbReference type="EMBL" id="BX248358">
    <property type="protein sequence ID" value="CAE50005.1"/>
    <property type="molecule type" value="Genomic_DNA"/>
</dbReference>
<dbReference type="RefSeq" id="WP_010935094.1">
    <property type="nucleotide sequence ID" value="NC_002935.2"/>
</dbReference>
<dbReference type="SMR" id="Q6NGN2"/>
<dbReference type="STRING" id="257309.DIP1477"/>
<dbReference type="KEGG" id="cdi:DIP1477"/>
<dbReference type="HOGENOM" id="CLU_006301_9_0_11"/>
<dbReference type="Proteomes" id="UP000002198">
    <property type="component" value="Chromosome"/>
</dbReference>
<dbReference type="GO" id="GO:0005829">
    <property type="term" value="C:cytosol"/>
    <property type="evidence" value="ECO:0007669"/>
    <property type="project" value="TreeGrafter"/>
</dbReference>
<dbReference type="GO" id="GO:0005525">
    <property type="term" value="F:GTP binding"/>
    <property type="evidence" value="ECO:0007669"/>
    <property type="project" value="UniProtKB-KW"/>
</dbReference>
<dbReference type="GO" id="GO:0003924">
    <property type="term" value="F:GTPase activity"/>
    <property type="evidence" value="ECO:0007669"/>
    <property type="project" value="UniProtKB-UniRule"/>
</dbReference>
<dbReference type="GO" id="GO:0003743">
    <property type="term" value="F:translation initiation factor activity"/>
    <property type="evidence" value="ECO:0007669"/>
    <property type="project" value="UniProtKB-UniRule"/>
</dbReference>
<dbReference type="CDD" id="cd01887">
    <property type="entry name" value="IF2_eIF5B"/>
    <property type="match status" value="1"/>
</dbReference>
<dbReference type="CDD" id="cd03702">
    <property type="entry name" value="IF2_mtIF2_II"/>
    <property type="match status" value="1"/>
</dbReference>
<dbReference type="CDD" id="cd03692">
    <property type="entry name" value="mtIF2_IVc"/>
    <property type="match status" value="1"/>
</dbReference>
<dbReference type="FunFam" id="2.40.30.10:FF:000007">
    <property type="entry name" value="Translation initiation factor IF-2"/>
    <property type="match status" value="1"/>
</dbReference>
<dbReference type="FunFam" id="2.40.30.10:FF:000008">
    <property type="entry name" value="Translation initiation factor IF-2"/>
    <property type="match status" value="1"/>
</dbReference>
<dbReference type="FunFam" id="3.40.50.10050:FF:000001">
    <property type="entry name" value="Translation initiation factor IF-2"/>
    <property type="match status" value="1"/>
</dbReference>
<dbReference type="FunFam" id="3.40.50.300:FF:000019">
    <property type="entry name" value="Translation initiation factor IF-2"/>
    <property type="match status" value="1"/>
</dbReference>
<dbReference type="Gene3D" id="1.10.10.2480">
    <property type="match status" value="1"/>
</dbReference>
<dbReference type="Gene3D" id="3.40.50.300">
    <property type="entry name" value="P-loop containing nucleotide triphosphate hydrolases"/>
    <property type="match status" value="1"/>
</dbReference>
<dbReference type="Gene3D" id="2.40.30.10">
    <property type="entry name" value="Translation factors"/>
    <property type="match status" value="2"/>
</dbReference>
<dbReference type="Gene3D" id="3.40.50.10050">
    <property type="entry name" value="Translation initiation factor IF- 2, domain 3"/>
    <property type="match status" value="1"/>
</dbReference>
<dbReference type="HAMAP" id="MF_00100_B">
    <property type="entry name" value="IF_2_B"/>
    <property type="match status" value="1"/>
</dbReference>
<dbReference type="InterPro" id="IPR053905">
    <property type="entry name" value="EF-G-like_DII"/>
</dbReference>
<dbReference type="InterPro" id="IPR004161">
    <property type="entry name" value="EFTu-like_2"/>
</dbReference>
<dbReference type="InterPro" id="IPR044145">
    <property type="entry name" value="IF2_II"/>
</dbReference>
<dbReference type="InterPro" id="IPR006847">
    <property type="entry name" value="IF2_N"/>
</dbReference>
<dbReference type="InterPro" id="IPR027417">
    <property type="entry name" value="P-loop_NTPase"/>
</dbReference>
<dbReference type="InterPro" id="IPR005225">
    <property type="entry name" value="Small_GTP-bd"/>
</dbReference>
<dbReference type="InterPro" id="IPR000795">
    <property type="entry name" value="T_Tr_GTP-bd_dom"/>
</dbReference>
<dbReference type="InterPro" id="IPR000178">
    <property type="entry name" value="TF_IF2_bacterial-like"/>
</dbReference>
<dbReference type="InterPro" id="IPR015760">
    <property type="entry name" value="TIF_IF2"/>
</dbReference>
<dbReference type="InterPro" id="IPR023115">
    <property type="entry name" value="TIF_IF2_dom3"/>
</dbReference>
<dbReference type="InterPro" id="IPR036925">
    <property type="entry name" value="TIF_IF2_dom3_sf"/>
</dbReference>
<dbReference type="InterPro" id="IPR009000">
    <property type="entry name" value="Transl_B-barrel_sf"/>
</dbReference>
<dbReference type="NCBIfam" id="TIGR00487">
    <property type="entry name" value="IF-2"/>
    <property type="match status" value="1"/>
</dbReference>
<dbReference type="NCBIfam" id="TIGR00231">
    <property type="entry name" value="small_GTP"/>
    <property type="match status" value="1"/>
</dbReference>
<dbReference type="PANTHER" id="PTHR43381:SF5">
    <property type="entry name" value="TR-TYPE G DOMAIN-CONTAINING PROTEIN"/>
    <property type="match status" value="1"/>
</dbReference>
<dbReference type="PANTHER" id="PTHR43381">
    <property type="entry name" value="TRANSLATION INITIATION FACTOR IF-2-RELATED"/>
    <property type="match status" value="1"/>
</dbReference>
<dbReference type="Pfam" id="PF22042">
    <property type="entry name" value="EF-G_D2"/>
    <property type="match status" value="1"/>
</dbReference>
<dbReference type="Pfam" id="PF00009">
    <property type="entry name" value="GTP_EFTU"/>
    <property type="match status" value="1"/>
</dbReference>
<dbReference type="Pfam" id="PF03144">
    <property type="entry name" value="GTP_EFTU_D2"/>
    <property type="match status" value="1"/>
</dbReference>
<dbReference type="Pfam" id="PF11987">
    <property type="entry name" value="IF-2"/>
    <property type="match status" value="1"/>
</dbReference>
<dbReference type="Pfam" id="PF04760">
    <property type="entry name" value="IF2_N"/>
    <property type="match status" value="2"/>
</dbReference>
<dbReference type="PRINTS" id="PR00315">
    <property type="entry name" value="ELONGATNFCT"/>
</dbReference>
<dbReference type="SMART" id="SM00173">
    <property type="entry name" value="RAS"/>
    <property type="match status" value="1"/>
</dbReference>
<dbReference type="SUPFAM" id="SSF52156">
    <property type="entry name" value="Initiation factor IF2/eIF5b, domain 3"/>
    <property type="match status" value="1"/>
</dbReference>
<dbReference type="SUPFAM" id="SSF52540">
    <property type="entry name" value="P-loop containing nucleoside triphosphate hydrolases"/>
    <property type="match status" value="1"/>
</dbReference>
<dbReference type="SUPFAM" id="SSF50447">
    <property type="entry name" value="Translation proteins"/>
    <property type="match status" value="2"/>
</dbReference>
<dbReference type="PROSITE" id="PS51722">
    <property type="entry name" value="G_TR_2"/>
    <property type="match status" value="1"/>
</dbReference>
<proteinExistence type="inferred from homology"/>
<protein>
    <recommendedName>
        <fullName evidence="2">Translation initiation factor IF-2</fullName>
    </recommendedName>
</protein>
<sequence length="953" mass="99597">MPGKLRVHELAKQLGVTSKELLATLKDQGEFVKTASSTIEPPVVKKMKKHYESLGVTTEAPAASQEPKAKKPAAPKPAAPKPAATPQQAAKPAAPKPAAPKPAAEKKPAPKPAAKPVPKPGFSAAKAESSAPKPAAPKPAAPKPAAQSSTTATPGSMPRPQAKPAPKPGGRAPRVANNPFSSGPRPAPRPGGGNRSGNAPRPGGGPRPGGNRPQGGQGGPAERAPRPGGRGGQPRPQGGSRSQQSGGQERQGGGRRPSPAMMPTHPNPGQMPSRSNGSRNGRGGAGGQGGRPGFGGGRPGGGGSAGGRGGRRGGTAGAFGRPGGAPRKGRKSKRQKRNEYEAMQAPNVIGGVRLPDGGGATIRLARGASLSDFAEKINADAAALVQALFNLGEMVTATASVNEETLQLLGEEMNYKVEVVSPEDEDRELLESFDLQFGEDEGTEEDLAKRPPVVTVMGHVDHGKTRLLDTIRKTNVGSDEAGGITQGIGAYQVTVNIDDLSRKITFLDTPGHEAFTAMRARGAKSTDIAVLVVAADDGVMPQTVEAINHAKAADVPIVVAVNKIDKPGASPDKIRGQLTEYGLVPEEYGGDTMFVDISAKQNINIDGLLEAVLLTADASLDLRANPDMDAQGVAIEAHLDRGRGPVATVIVQRGTLRVGDSVVAGDAYGRVRRMVDEYGNDVEEAGPSRPVQMQGLNGVPGAGDNLLVVEDDRVARQIANQRNARKRNALAAKTRKRVSLEDLDSVLKETSTLNLILKGDNAGSVEALEDALLKIEVDDEVQLNIIDRGVGAVTQTNVSLAAASDAVIIAFNVRAEGKATEEANAEGVDIRYYTVIYRALEEVEQALKGMLKPIYEEREIGRAEIRAIFKASAVGLIAGCMVESGKVRRNASIRLLRDGTVVADNAKIESLRREKDDATEVAAGYECGMVLSYPDIQVGDIIEVFEQVEVPRT</sequence>
<comment type="function">
    <text evidence="2">One of the essential components for the initiation of protein synthesis. Protects formylmethionyl-tRNA from spontaneous hydrolysis and promotes its binding to the 30S ribosomal subunits. Also involved in the hydrolysis of GTP during the formation of the 70S ribosomal complex.</text>
</comment>
<comment type="subcellular location">
    <subcellularLocation>
        <location evidence="2">Cytoplasm</location>
    </subcellularLocation>
</comment>
<comment type="similarity">
    <text evidence="2">Belongs to the TRAFAC class translation factor GTPase superfamily. Classic translation factor GTPase family. IF-2 subfamily.</text>
</comment>
<feature type="chain" id="PRO_0000228186" description="Translation initiation factor IF-2">
    <location>
        <begin position="1"/>
        <end position="953"/>
    </location>
</feature>
<feature type="domain" description="tr-type G">
    <location>
        <begin position="449"/>
        <end position="621"/>
    </location>
</feature>
<feature type="region of interest" description="Disordered" evidence="3">
    <location>
        <begin position="55"/>
        <end position="340"/>
    </location>
</feature>
<feature type="region of interest" description="G1" evidence="1">
    <location>
        <begin position="458"/>
        <end position="465"/>
    </location>
</feature>
<feature type="region of interest" description="G2" evidence="1">
    <location>
        <begin position="483"/>
        <end position="487"/>
    </location>
</feature>
<feature type="region of interest" description="G3" evidence="1">
    <location>
        <begin position="508"/>
        <end position="511"/>
    </location>
</feature>
<feature type="region of interest" description="G4" evidence="1">
    <location>
        <begin position="562"/>
        <end position="565"/>
    </location>
</feature>
<feature type="region of interest" description="G5" evidence="1">
    <location>
        <begin position="598"/>
        <end position="600"/>
    </location>
</feature>
<feature type="compositionally biased region" description="Low complexity" evidence="3">
    <location>
        <begin position="81"/>
        <end position="93"/>
    </location>
</feature>
<feature type="compositionally biased region" description="Pro residues" evidence="3">
    <location>
        <begin position="110"/>
        <end position="119"/>
    </location>
</feature>
<feature type="compositionally biased region" description="Low complexity" evidence="3">
    <location>
        <begin position="123"/>
        <end position="133"/>
    </location>
</feature>
<feature type="compositionally biased region" description="Low complexity" evidence="3">
    <location>
        <begin position="143"/>
        <end position="160"/>
    </location>
</feature>
<feature type="compositionally biased region" description="Gly residues" evidence="3">
    <location>
        <begin position="202"/>
        <end position="219"/>
    </location>
</feature>
<feature type="compositionally biased region" description="Low complexity" evidence="3">
    <location>
        <begin position="233"/>
        <end position="248"/>
    </location>
</feature>
<feature type="compositionally biased region" description="Gly residues" evidence="3">
    <location>
        <begin position="280"/>
        <end position="323"/>
    </location>
</feature>
<feature type="compositionally biased region" description="Basic residues" evidence="3">
    <location>
        <begin position="327"/>
        <end position="336"/>
    </location>
</feature>
<feature type="binding site" evidence="2">
    <location>
        <begin position="458"/>
        <end position="465"/>
    </location>
    <ligand>
        <name>GTP</name>
        <dbReference type="ChEBI" id="CHEBI:37565"/>
    </ligand>
</feature>
<feature type="binding site" evidence="2">
    <location>
        <begin position="508"/>
        <end position="512"/>
    </location>
    <ligand>
        <name>GTP</name>
        <dbReference type="ChEBI" id="CHEBI:37565"/>
    </ligand>
</feature>
<feature type="binding site" evidence="2">
    <location>
        <begin position="562"/>
        <end position="565"/>
    </location>
    <ligand>
        <name>GTP</name>
        <dbReference type="ChEBI" id="CHEBI:37565"/>
    </ligand>
</feature>